<gene>
    <name evidence="1" type="primary">rimO</name>
    <name type="ordered locus">PA14_52420</name>
</gene>
<protein>
    <recommendedName>
        <fullName evidence="1">Ribosomal protein uS12 methylthiotransferase RimO</fullName>
        <shortName evidence="1">uS12 MTTase</shortName>
        <shortName evidence="1">uS12 methylthiotransferase</shortName>
        <ecNumber evidence="1">2.8.4.4</ecNumber>
    </recommendedName>
    <alternativeName>
        <fullName evidence="1">Ribosomal protein uS12 (aspartate-C(3))-methylthiotransferase</fullName>
    </alternativeName>
    <alternativeName>
        <fullName evidence="1">Ribosome maturation factor RimO</fullName>
    </alternativeName>
</protein>
<proteinExistence type="inferred from homology"/>
<sequence>MSTPTPKVGFVSLGCPKALVDSERILTQLRMEGYEVVPTYEDADVVVVNTCGFIDSAKAESLEVIGEAIAENGKVIVTGCMGVEEHTIRDVHPSVLAVTGPQQYEQVVTAVHEVVPPKTEHNPLVDLVPPQGVKLTPRHYAYLKISEGCNHSCSFCIIPSMRGKLVSRPVGDVLSEAERLVKAGVKELLVISQDTSAYGVDLKYKTDFWNGQPVKTRMKELCEALSSMGVWVRLHYVYPYPNVDDVIPLMAAGKLLPYLDIPFQHASPKVLKAMKRPAFEDKTLARIKQWREICPELTIRSTFIVGFPGETEEDFQYLLDWLTEAQLDRVGCFQYSPVEGAPANELGLEPVPDEVKQDRWERFMAHQQAISAARLQLKVGKEIEVLIDEVDEQGAVGRSWADAPEIDGNVFVDSDELKPGDKVRVRITDADEYDLWAELV</sequence>
<reference key="1">
    <citation type="journal article" date="2006" name="Genome Biol.">
        <title>Genomic analysis reveals that Pseudomonas aeruginosa virulence is combinatorial.</title>
        <authorList>
            <person name="Lee D.G."/>
            <person name="Urbach J.M."/>
            <person name="Wu G."/>
            <person name="Liberati N.T."/>
            <person name="Feinbaum R.L."/>
            <person name="Miyata S."/>
            <person name="Diggins L.T."/>
            <person name="He J."/>
            <person name="Saucier M."/>
            <person name="Deziel E."/>
            <person name="Friedman L."/>
            <person name="Li L."/>
            <person name="Grills G."/>
            <person name="Montgomery K."/>
            <person name="Kucherlapati R."/>
            <person name="Rahme L.G."/>
            <person name="Ausubel F.M."/>
        </authorList>
    </citation>
    <scope>NUCLEOTIDE SEQUENCE [LARGE SCALE GENOMIC DNA]</scope>
    <source>
        <strain>UCBPP-PA14</strain>
    </source>
</reference>
<comment type="function">
    <text evidence="1">Catalyzes the methylthiolation of an aspartic acid residue of ribosomal protein uS12.</text>
</comment>
<comment type="catalytic activity">
    <reaction evidence="1">
        <text>L-aspartate(89)-[ribosomal protein uS12]-hydrogen + (sulfur carrier)-SH + AH2 + 2 S-adenosyl-L-methionine = 3-methylsulfanyl-L-aspartate(89)-[ribosomal protein uS12]-hydrogen + (sulfur carrier)-H + 5'-deoxyadenosine + L-methionine + A + S-adenosyl-L-homocysteine + 2 H(+)</text>
        <dbReference type="Rhea" id="RHEA:37087"/>
        <dbReference type="Rhea" id="RHEA-COMP:10460"/>
        <dbReference type="Rhea" id="RHEA-COMP:10461"/>
        <dbReference type="Rhea" id="RHEA-COMP:14737"/>
        <dbReference type="Rhea" id="RHEA-COMP:14739"/>
        <dbReference type="ChEBI" id="CHEBI:13193"/>
        <dbReference type="ChEBI" id="CHEBI:15378"/>
        <dbReference type="ChEBI" id="CHEBI:17319"/>
        <dbReference type="ChEBI" id="CHEBI:17499"/>
        <dbReference type="ChEBI" id="CHEBI:29917"/>
        <dbReference type="ChEBI" id="CHEBI:29961"/>
        <dbReference type="ChEBI" id="CHEBI:57844"/>
        <dbReference type="ChEBI" id="CHEBI:57856"/>
        <dbReference type="ChEBI" id="CHEBI:59789"/>
        <dbReference type="ChEBI" id="CHEBI:64428"/>
        <dbReference type="ChEBI" id="CHEBI:73599"/>
        <dbReference type="EC" id="2.8.4.4"/>
    </reaction>
</comment>
<comment type="cofactor">
    <cofactor evidence="1">
        <name>[4Fe-4S] cluster</name>
        <dbReference type="ChEBI" id="CHEBI:49883"/>
    </cofactor>
    <text evidence="1">Binds 2 [4Fe-4S] clusters. One cluster is coordinated with 3 cysteines and an exchangeable S-adenosyl-L-methionine.</text>
</comment>
<comment type="subcellular location">
    <subcellularLocation>
        <location evidence="1">Cytoplasm</location>
    </subcellularLocation>
</comment>
<comment type="similarity">
    <text evidence="1">Belongs to the methylthiotransferase family. RimO subfamily.</text>
</comment>
<name>RIMO_PSEAB</name>
<keyword id="KW-0004">4Fe-4S</keyword>
<keyword id="KW-0963">Cytoplasm</keyword>
<keyword id="KW-0408">Iron</keyword>
<keyword id="KW-0411">Iron-sulfur</keyword>
<keyword id="KW-0479">Metal-binding</keyword>
<keyword id="KW-0949">S-adenosyl-L-methionine</keyword>
<keyword id="KW-0808">Transferase</keyword>
<organism>
    <name type="scientific">Pseudomonas aeruginosa (strain UCBPP-PA14)</name>
    <dbReference type="NCBI Taxonomy" id="208963"/>
    <lineage>
        <taxon>Bacteria</taxon>
        <taxon>Pseudomonadati</taxon>
        <taxon>Pseudomonadota</taxon>
        <taxon>Gammaproteobacteria</taxon>
        <taxon>Pseudomonadales</taxon>
        <taxon>Pseudomonadaceae</taxon>
        <taxon>Pseudomonas</taxon>
    </lineage>
</organism>
<feature type="chain" id="PRO_0000374943" description="Ribosomal protein uS12 methylthiotransferase RimO">
    <location>
        <begin position="1"/>
        <end position="440"/>
    </location>
</feature>
<feature type="domain" description="MTTase N-terminal" evidence="1">
    <location>
        <begin position="6"/>
        <end position="116"/>
    </location>
</feature>
<feature type="domain" description="Radical SAM core" evidence="2">
    <location>
        <begin position="135"/>
        <end position="373"/>
    </location>
</feature>
<feature type="domain" description="TRAM" evidence="1">
    <location>
        <begin position="376"/>
        <end position="440"/>
    </location>
</feature>
<feature type="binding site" evidence="1">
    <location>
        <position position="15"/>
    </location>
    <ligand>
        <name>[4Fe-4S] cluster</name>
        <dbReference type="ChEBI" id="CHEBI:49883"/>
        <label>1</label>
    </ligand>
</feature>
<feature type="binding site" evidence="1">
    <location>
        <position position="51"/>
    </location>
    <ligand>
        <name>[4Fe-4S] cluster</name>
        <dbReference type="ChEBI" id="CHEBI:49883"/>
        <label>1</label>
    </ligand>
</feature>
<feature type="binding site" evidence="1">
    <location>
        <position position="80"/>
    </location>
    <ligand>
        <name>[4Fe-4S] cluster</name>
        <dbReference type="ChEBI" id="CHEBI:49883"/>
        <label>1</label>
    </ligand>
</feature>
<feature type="binding site" evidence="1">
    <location>
        <position position="149"/>
    </location>
    <ligand>
        <name>[4Fe-4S] cluster</name>
        <dbReference type="ChEBI" id="CHEBI:49883"/>
        <label>2</label>
        <note>4Fe-4S-S-AdoMet</note>
    </ligand>
</feature>
<feature type="binding site" evidence="1">
    <location>
        <position position="153"/>
    </location>
    <ligand>
        <name>[4Fe-4S] cluster</name>
        <dbReference type="ChEBI" id="CHEBI:49883"/>
        <label>2</label>
        <note>4Fe-4S-S-AdoMet</note>
    </ligand>
</feature>
<feature type="binding site" evidence="1">
    <location>
        <position position="156"/>
    </location>
    <ligand>
        <name>[4Fe-4S] cluster</name>
        <dbReference type="ChEBI" id="CHEBI:49883"/>
        <label>2</label>
        <note>4Fe-4S-S-AdoMet</note>
    </ligand>
</feature>
<evidence type="ECO:0000255" key="1">
    <source>
        <dbReference type="HAMAP-Rule" id="MF_01865"/>
    </source>
</evidence>
<evidence type="ECO:0000255" key="2">
    <source>
        <dbReference type="PROSITE-ProRule" id="PRU01266"/>
    </source>
</evidence>
<accession>Q02I76</accession>
<dbReference type="EC" id="2.8.4.4" evidence="1"/>
<dbReference type="EMBL" id="CP000438">
    <property type="protein sequence ID" value="ABJ10075.1"/>
    <property type="molecule type" value="Genomic_DNA"/>
</dbReference>
<dbReference type="RefSeq" id="WP_003120722.1">
    <property type="nucleotide sequence ID" value="NZ_CP034244.1"/>
</dbReference>
<dbReference type="SMR" id="Q02I76"/>
<dbReference type="KEGG" id="pau:PA14_52420"/>
<dbReference type="PseudoCAP" id="PA14_52420"/>
<dbReference type="HOGENOM" id="CLU_018697_0_0_6"/>
<dbReference type="BioCyc" id="PAER208963:G1G74-4411-MONOMER"/>
<dbReference type="Proteomes" id="UP000000653">
    <property type="component" value="Chromosome"/>
</dbReference>
<dbReference type="GO" id="GO:0005829">
    <property type="term" value="C:cytosol"/>
    <property type="evidence" value="ECO:0007669"/>
    <property type="project" value="TreeGrafter"/>
</dbReference>
<dbReference type="GO" id="GO:0051539">
    <property type="term" value="F:4 iron, 4 sulfur cluster binding"/>
    <property type="evidence" value="ECO:0007669"/>
    <property type="project" value="UniProtKB-UniRule"/>
</dbReference>
<dbReference type="GO" id="GO:0035599">
    <property type="term" value="F:aspartic acid methylthiotransferase activity"/>
    <property type="evidence" value="ECO:0007669"/>
    <property type="project" value="TreeGrafter"/>
</dbReference>
<dbReference type="GO" id="GO:0046872">
    <property type="term" value="F:metal ion binding"/>
    <property type="evidence" value="ECO:0007669"/>
    <property type="project" value="UniProtKB-KW"/>
</dbReference>
<dbReference type="GO" id="GO:0103039">
    <property type="term" value="F:protein methylthiotransferase activity"/>
    <property type="evidence" value="ECO:0007669"/>
    <property type="project" value="UniProtKB-EC"/>
</dbReference>
<dbReference type="GO" id="GO:0006400">
    <property type="term" value="P:tRNA modification"/>
    <property type="evidence" value="ECO:0007669"/>
    <property type="project" value="InterPro"/>
</dbReference>
<dbReference type="CDD" id="cd01335">
    <property type="entry name" value="Radical_SAM"/>
    <property type="match status" value="1"/>
</dbReference>
<dbReference type="FunFam" id="2.40.50.140:FF:000060">
    <property type="entry name" value="Ribosomal protein S12 methylthiotransferase RimO"/>
    <property type="match status" value="1"/>
</dbReference>
<dbReference type="FunFam" id="3.40.50.12160:FF:000002">
    <property type="entry name" value="Ribosomal protein S12 methylthiotransferase RimO"/>
    <property type="match status" value="1"/>
</dbReference>
<dbReference type="FunFam" id="3.80.30.20:FF:000001">
    <property type="entry name" value="tRNA-2-methylthio-N(6)-dimethylallyladenosine synthase 2"/>
    <property type="match status" value="1"/>
</dbReference>
<dbReference type="Gene3D" id="3.40.50.12160">
    <property type="entry name" value="Methylthiotransferase, N-terminal domain"/>
    <property type="match status" value="1"/>
</dbReference>
<dbReference type="Gene3D" id="2.40.50.140">
    <property type="entry name" value="Nucleic acid-binding proteins"/>
    <property type="match status" value="1"/>
</dbReference>
<dbReference type="Gene3D" id="3.80.30.20">
    <property type="entry name" value="tm_1862 like domain"/>
    <property type="match status" value="1"/>
</dbReference>
<dbReference type="HAMAP" id="MF_01865">
    <property type="entry name" value="MTTase_RimO"/>
    <property type="match status" value="1"/>
</dbReference>
<dbReference type="InterPro" id="IPR006638">
    <property type="entry name" value="Elp3/MiaA/NifB-like_rSAM"/>
</dbReference>
<dbReference type="InterPro" id="IPR005839">
    <property type="entry name" value="Methylthiotransferase"/>
</dbReference>
<dbReference type="InterPro" id="IPR020612">
    <property type="entry name" value="Methylthiotransferase_CS"/>
</dbReference>
<dbReference type="InterPro" id="IPR013848">
    <property type="entry name" value="Methylthiotransferase_N"/>
</dbReference>
<dbReference type="InterPro" id="IPR038135">
    <property type="entry name" value="Methylthiotransferase_N_sf"/>
</dbReference>
<dbReference type="InterPro" id="IPR012340">
    <property type="entry name" value="NA-bd_OB-fold"/>
</dbReference>
<dbReference type="InterPro" id="IPR005840">
    <property type="entry name" value="Ribosomal_uS12_MeSTrfase_RimO"/>
</dbReference>
<dbReference type="InterPro" id="IPR007197">
    <property type="entry name" value="rSAM"/>
</dbReference>
<dbReference type="InterPro" id="IPR023404">
    <property type="entry name" value="rSAM_horseshoe"/>
</dbReference>
<dbReference type="InterPro" id="IPR002792">
    <property type="entry name" value="TRAM_dom"/>
</dbReference>
<dbReference type="NCBIfam" id="TIGR01125">
    <property type="entry name" value="30S ribosomal protein S12 methylthiotransferase RimO"/>
    <property type="match status" value="1"/>
</dbReference>
<dbReference type="NCBIfam" id="TIGR00089">
    <property type="entry name" value="MiaB/RimO family radical SAM methylthiotransferase"/>
    <property type="match status" value="1"/>
</dbReference>
<dbReference type="PANTHER" id="PTHR43837">
    <property type="entry name" value="RIBOSOMAL PROTEIN S12 METHYLTHIOTRANSFERASE RIMO"/>
    <property type="match status" value="1"/>
</dbReference>
<dbReference type="PANTHER" id="PTHR43837:SF1">
    <property type="entry name" value="RIBOSOMAL PROTEIN US12 METHYLTHIOTRANSFERASE RIMO"/>
    <property type="match status" value="1"/>
</dbReference>
<dbReference type="Pfam" id="PF04055">
    <property type="entry name" value="Radical_SAM"/>
    <property type="match status" value="1"/>
</dbReference>
<dbReference type="Pfam" id="PF18693">
    <property type="entry name" value="TRAM_2"/>
    <property type="match status" value="1"/>
</dbReference>
<dbReference type="Pfam" id="PF00919">
    <property type="entry name" value="UPF0004"/>
    <property type="match status" value="1"/>
</dbReference>
<dbReference type="SFLD" id="SFLDG01082">
    <property type="entry name" value="B12-binding_domain_containing"/>
    <property type="match status" value="1"/>
</dbReference>
<dbReference type="SFLD" id="SFLDG01061">
    <property type="entry name" value="methylthiotransferase"/>
    <property type="match status" value="1"/>
</dbReference>
<dbReference type="SFLD" id="SFLDF00274">
    <property type="entry name" value="ribosomal_protein_S12_methylth"/>
    <property type="match status" value="1"/>
</dbReference>
<dbReference type="SMART" id="SM00729">
    <property type="entry name" value="Elp3"/>
    <property type="match status" value="1"/>
</dbReference>
<dbReference type="SUPFAM" id="SSF102114">
    <property type="entry name" value="Radical SAM enzymes"/>
    <property type="match status" value="1"/>
</dbReference>
<dbReference type="PROSITE" id="PS51449">
    <property type="entry name" value="MTTASE_N"/>
    <property type="match status" value="1"/>
</dbReference>
<dbReference type="PROSITE" id="PS01278">
    <property type="entry name" value="MTTASE_RADICAL"/>
    <property type="match status" value="1"/>
</dbReference>
<dbReference type="PROSITE" id="PS51918">
    <property type="entry name" value="RADICAL_SAM"/>
    <property type="match status" value="1"/>
</dbReference>
<dbReference type="PROSITE" id="PS50926">
    <property type="entry name" value="TRAM"/>
    <property type="match status" value="1"/>
</dbReference>